<keyword id="KW-0963">Cytoplasm</keyword>
<keyword id="KW-0269">Exonuclease</keyword>
<keyword id="KW-0378">Hydrolase</keyword>
<keyword id="KW-0540">Nuclease</keyword>
<keyword id="KW-1185">Reference proteome</keyword>
<keyword id="KW-0694">RNA-binding</keyword>
<organism>
    <name type="scientific">Edwardsiella piscicida</name>
    <dbReference type="NCBI Taxonomy" id="1263550"/>
    <lineage>
        <taxon>Bacteria</taxon>
        <taxon>Pseudomonadati</taxon>
        <taxon>Pseudomonadota</taxon>
        <taxon>Gammaproteobacteria</taxon>
        <taxon>Enterobacterales</taxon>
        <taxon>Hafniaceae</taxon>
        <taxon>Edwardsiella</taxon>
    </lineage>
</organism>
<reference key="1">
    <citation type="journal article" date="2009" name="PLoS ONE">
        <title>Genome sequence of the versatile fish pathogen Edwardsiella tarda provides insights into its adaptation to broad host ranges and intracellular niches.</title>
        <authorList>
            <person name="Wang Q."/>
            <person name="Yang M."/>
            <person name="Xiao J."/>
            <person name="Wu H."/>
            <person name="Wang X."/>
            <person name="Lv Y."/>
            <person name="Xu L."/>
            <person name="Zheng H."/>
            <person name="Wang S."/>
            <person name="Zhao G."/>
            <person name="Liu Q."/>
            <person name="Zhang Y."/>
        </authorList>
    </citation>
    <scope>NUCLEOTIDE SEQUENCE [LARGE SCALE GENOMIC DNA]</scope>
    <source>
        <strain>EIB202 / CCTCC M208068</strain>
    </source>
</reference>
<dbReference type="EC" id="3.1.13.1" evidence="2"/>
<dbReference type="EMBL" id="CP001135">
    <property type="protein sequence ID" value="ACY84715.1"/>
    <property type="status" value="ALT_INIT"/>
    <property type="molecule type" value="Genomic_DNA"/>
</dbReference>
<dbReference type="RefSeq" id="WP_041692521.1">
    <property type="nucleotide sequence ID" value="NC_013508.1"/>
</dbReference>
<dbReference type="SMR" id="D0Z8E6"/>
<dbReference type="GeneID" id="72528703"/>
<dbReference type="KEGG" id="etr:ETAE_1878"/>
<dbReference type="HOGENOM" id="CLU_002333_7_3_6"/>
<dbReference type="OrthoDB" id="9764149at2"/>
<dbReference type="Proteomes" id="UP000002634">
    <property type="component" value="Chromosome"/>
</dbReference>
<dbReference type="GO" id="GO:0005829">
    <property type="term" value="C:cytosol"/>
    <property type="evidence" value="ECO:0007669"/>
    <property type="project" value="TreeGrafter"/>
</dbReference>
<dbReference type="GO" id="GO:0008859">
    <property type="term" value="F:exoribonuclease II activity"/>
    <property type="evidence" value="ECO:0007669"/>
    <property type="project" value="UniProtKB-UniRule"/>
</dbReference>
<dbReference type="GO" id="GO:0003723">
    <property type="term" value="F:RNA binding"/>
    <property type="evidence" value="ECO:0007669"/>
    <property type="project" value="UniProtKB-KW"/>
</dbReference>
<dbReference type="GO" id="GO:0006402">
    <property type="term" value="P:mRNA catabolic process"/>
    <property type="evidence" value="ECO:0007669"/>
    <property type="project" value="UniProtKB-UniRule"/>
</dbReference>
<dbReference type="FunFam" id="2.40.50.140:FF:000079">
    <property type="entry name" value="Exoribonuclease 2"/>
    <property type="match status" value="1"/>
</dbReference>
<dbReference type="Gene3D" id="2.40.50.640">
    <property type="match status" value="1"/>
</dbReference>
<dbReference type="Gene3D" id="2.40.50.140">
    <property type="entry name" value="Nucleic acid-binding proteins"/>
    <property type="match status" value="2"/>
</dbReference>
<dbReference type="HAMAP" id="MF_01036">
    <property type="entry name" value="RNase_II"/>
    <property type="match status" value="1"/>
</dbReference>
<dbReference type="InterPro" id="IPR011129">
    <property type="entry name" value="CSD"/>
</dbReference>
<dbReference type="InterPro" id="IPR012340">
    <property type="entry name" value="NA-bd_OB-fold"/>
</dbReference>
<dbReference type="InterPro" id="IPR013223">
    <property type="entry name" value="RNase_B_OB_dom"/>
</dbReference>
<dbReference type="InterPro" id="IPR011804">
    <property type="entry name" value="RNase_II"/>
</dbReference>
<dbReference type="InterPro" id="IPR001900">
    <property type="entry name" value="RNase_II/R"/>
</dbReference>
<dbReference type="InterPro" id="IPR022966">
    <property type="entry name" value="RNase_II/R_CS"/>
</dbReference>
<dbReference type="InterPro" id="IPR004476">
    <property type="entry name" value="RNase_II/RNase_R"/>
</dbReference>
<dbReference type="InterPro" id="IPR050180">
    <property type="entry name" value="RNR_Ribonuclease"/>
</dbReference>
<dbReference type="InterPro" id="IPR003029">
    <property type="entry name" value="S1_domain"/>
</dbReference>
<dbReference type="NCBIfam" id="TIGR00358">
    <property type="entry name" value="3_prime_RNase"/>
    <property type="match status" value="1"/>
</dbReference>
<dbReference type="NCBIfam" id="NF003455">
    <property type="entry name" value="PRK05054.1"/>
    <property type="match status" value="1"/>
</dbReference>
<dbReference type="NCBIfam" id="TIGR02062">
    <property type="entry name" value="RNase_B"/>
    <property type="match status" value="1"/>
</dbReference>
<dbReference type="PANTHER" id="PTHR23355:SF37">
    <property type="entry name" value="EXORIBONUCLEASE 2"/>
    <property type="match status" value="1"/>
</dbReference>
<dbReference type="PANTHER" id="PTHR23355">
    <property type="entry name" value="RIBONUCLEASE"/>
    <property type="match status" value="1"/>
</dbReference>
<dbReference type="Pfam" id="PF08206">
    <property type="entry name" value="OB_RNB"/>
    <property type="match status" value="1"/>
</dbReference>
<dbReference type="Pfam" id="PF00773">
    <property type="entry name" value="RNB"/>
    <property type="match status" value="1"/>
</dbReference>
<dbReference type="Pfam" id="PF00575">
    <property type="entry name" value="S1"/>
    <property type="match status" value="1"/>
</dbReference>
<dbReference type="SMART" id="SM00357">
    <property type="entry name" value="CSP"/>
    <property type="match status" value="1"/>
</dbReference>
<dbReference type="SMART" id="SM00955">
    <property type="entry name" value="RNB"/>
    <property type="match status" value="1"/>
</dbReference>
<dbReference type="SUPFAM" id="SSF50249">
    <property type="entry name" value="Nucleic acid-binding proteins"/>
    <property type="match status" value="4"/>
</dbReference>
<dbReference type="PROSITE" id="PS01175">
    <property type="entry name" value="RIBONUCLEASE_II"/>
    <property type="match status" value="1"/>
</dbReference>
<proteinExistence type="inferred from homology"/>
<evidence type="ECO:0000255" key="1"/>
<evidence type="ECO:0000255" key="2">
    <source>
        <dbReference type="HAMAP-Rule" id="MF_01036"/>
    </source>
</evidence>
<evidence type="ECO:0000305" key="3"/>
<name>RNB_EDWPI</name>
<sequence length="647" mass="72754">MFQDNPLLAQLKQQLHSQTPRVEGVVKGTDKGFGFLEVDAQKSYFIPPPQMKKVMHGDRVRAAVQVDKEREIAEPEELLEPFLTRFVGRIQKKENDERLSIIPDHSLLKDAIGCRPARGLDRAFRQGDWVLAEMRRHPLKGDRSFFAEITAFITDGSDHFAPWWVTLTRHDLARSAPQWQAGTLLEEGLAREDLCALPFVTIDSASTEDMDDALHVRENADGSLCLTIAIADPTAYVSADSPLDAEARHRAFTTYLPGFNIPMLPRDLSDDLCSLREGQRRPVLACEVTLDADGSLRDDIRFFSGWIESKAKLVYDRVSDWLEGRGDWQPPSDDIAAQIRLLHRVANARTQWRQQHALVFRDRPDYRFVLDDHGDVTDIVAEPRRVANRIVEECMITANVCAALVLRERLGFGIYNVHTGFDPALVEQAVSLLNANDVAANAEALLTLDGFCTLRRHLDSLPSTFLDSRIRRFQTFAEISTEPGPHFGLGLEAYATWTSPIRKYGDMVNHRLLKALIAGAPATRPDPAMTLQLAERRRQNRMAERDVGDWLYARFLKDKVNAPTPFNAEIIDISRGGMRVRLLENGAVAFIPASFIHAVRDEMVCSQENGTLQVKGSVVYRQGDTVPVTLSEVRLDTRSLIARPFSA</sequence>
<accession>D0Z8E6</accession>
<protein>
    <recommendedName>
        <fullName evidence="2">Exoribonuclease 2</fullName>
        <ecNumber evidence="2">3.1.13.1</ecNumber>
    </recommendedName>
    <alternativeName>
        <fullName evidence="2">Exoribonuclease II</fullName>
        <shortName evidence="2">RNase II</shortName>
        <shortName evidence="2">Ribonuclease II</shortName>
    </alternativeName>
</protein>
<comment type="function">
    <text evidence="2">Involved in mRNA degradation. Hydrolyzes single-stranded polyribonucleotides processively in the 3' to 5' direction.</text>
</comment>
<comment type="catalytic activity">
    <reaction evidence="2">
        <text>Exonucleolytic cleavage in the 3'- to 5'-direction to yield nucleoside 5'-phosphates.</text>
        <dbReference type="EC" id="3.1.13.1"/>
    </reaction>
</comment>
<comment type="subcellular location">
    <subcellularLocation>
        <location evidence="2">Cytoplasm</location>
    </subcellularLocation>
</comment>
<comment type="similarity">
    <text evidence="2">Belongs to the RNR ribonuclease family. RNase II subfamily.</text>
</comment>
<comment type="sequence caution" evidence="3">
    <conflict type="erroneous initiation">
        <sequence resource="EMBL-CDS" id="ACY84715"/>
    </conflict>
    <text>Truncated N-terminus.</text>
</comment>
<feature type="chain" id="PRO_0000409535" description="Exoribonuclease 2">
    <location>
        <begin position="1"/>
        <end position="647"/>
    </location>
</feature>
<feature type="domain" description="RNB" evidence="1">
    <location>
        <begin position="191"/>
        <end position="517"/>
    </location>
</feature>
<feature type="domain" description="S1 motif" evidence="2">
    <location>
        <begin position="563"/>
        <end position="645"/>
    </location>
</feature>
<gene>
    <name evidence="2" type="primary">rnb</name>
    <name type="ordered locus">ETAE_1878</name>
</gene>